<evidence type="ECO:0000250" key="1"/>
<evidence type="ECO:0000255" key="2"/>
<evidence type="ECO:0000305" key="3"/>
<feature type="signal peptide" evidence="2">
    <location>
        <begin position="1"/>
        <end position="21"/>
    </location>
</feature>
<feature type="chain" id="PRO_0000033079" description="Somatolactin">
    <location>
        <begin position="22"/>
        <end position="229"/>
    </location>
</feature>
<feature type="glycosylation site" description="N-linked (GlcNAc...) asparagine" evidence="2">
    <location>
        <position position="143"/>
    </location>
</feature>
<feature type="disulfide bond" evidence="1">
    <location>
        <begin position="26"/>
        <end position="36"/>
    </location>
</feature>
<feature type="disulfide bond" evidence="1">
    <location>
        <begin position="87"/>
        <end position="203"/>
    </location>
</feature>
<feature type="disulfide bond" evidence="1">
    <location>
        <begin position="220"/>
        <end position="228"/>
    </location>
</feature>
<dbReference type="EMBL" id="AF253066">
    <property type="protein sequence ID" value="AAF64522.1"/>
    <property type="molecule type" value="mRNA"/>
</dbReference>
<dbReference type="SMR" id="Q9I9H4"/>
<dbReference type="GO" id="GO:0005615">
    <property type="term" value="C:extracellular space"/>
    <property type="evidence" value="ECO:0007669"/>
    <property type="project" value="TreeGrafter"/>
</dbReference>
<dbReference type="GO" id="GO:0070186">
    <property type="term" value="F:growth hormone activity"/>
    <property type="evidence" value="ECO:0007669"/>
    <property type="project" value="TreeGrafter"/>
</dbReference>
<dbReference type="GO" id="GO:0005131">
    <property type="term" value="F:growth hormone receptor binding"/>
    <property type="evidence" value="ECO:0007669"/>
    <property type="project" value="TreeGrafter"/>
</dbReference>
<dbReference type="GO" id="GO:0048513">
    <property type="term" value="P:animal organ development"/>
    <property type="evidence" value="ECO:0007669"/>
    <property type="project" value="TreeGrafter"/>
</dbReference>
<dbReference type="GO" id="GO:0060396">
    <property type="term" value="P:growth hormone receptor signaling pathway"/>
    <property type="evidence" value="ECO:0007669"/>
    <property type="project" value="TreeGrafter"/>
</dbReference>
<dbReference type="GO" id="GO:0045927">
    <property type="term" value="P:positive regulation of growth"/>
    <property type="evidence" value="ECO:0007669"/>
    <property type="project" value="TreeGrafter"/>
</dbReference>
<dbReference type="GO" id="GO:0046427">
    <property type="term" value="P:positive regulation of receptor signaling pathway via JAK-STAT"/>
    <property type="evidence" value="ECO:0007669"/>
    <property type="project" value="TreeGrafter"/>
</dbReference>
<dbReference type="GO" id="GO:0031667">
    <property type="term" value="P:response to nutrient levels"/>
    <property type="evidence" value="ECO:0007669"/>
    <property type="project" value="TreeGrafter"/>
</dbReference>
<dbReference type="Gene3D" id="1.20.1250.10">
    <property type="match status" value="1"/>
</dbReference>
<dbReference type="InterPro" id="IPR009079">
    <property type="entry name" value="4_helix_cytokine-like_core"/>
</dbReference>
<dbReference type="InterPro" id="IPR001400">
    <property type="entry name" value="Somatotropin/Prolactin"/>
</dbReference>
<dbReference type="InterPro" id="IPR018116">
    <property type="entry name" value="Somatotropin_CS"/>
</dbReference>
<dbReference type="PANTHER" id="PTHR11417:SF3">
    <property type="entry name" value="SOMATOLACTIN ALPHA ISOFORM X1-RELATED"/>
    <property type="match status" value="1"/>
</dbReference>
<dbReference type="PANTHER" id="PTHR11417">
    <property type="entry name" value="SOMATOTROPIN,PROLACTIN"/>
    <property type="match status" value="1"/>
</dbReference>
<dbReference type="Pfam" id="PF00103">
    <property type="entry name" value="Hormone_1"/>
    <property type="match status" value="1"/>
</dbReference>
<dbReference type="PRINTS" id="PR00836">
    <property type="entry name" value="SOMATOTROPIN"/>
</dbReference>
<dbReference type="SUPFAM" id="SSF47266">
    <property type="entry name" value="4-helical cytokines"/>
    <property type="match status" value="1"/>
</dbReference>
<dbReference type="PROSITE" id="PS00266">
    <property type="entry name" value="SOMATOTROPIN_1"/>
    <property type="match status" value="1"/>
</dbReference>
<dbReference type="PROSITE" id="PS00338">
    <property type="entry name" value="SOMATOTROPIN_2"/>
    <property type="match status" value="1"/>
</dbReference>
<keyword id="KW-1015">Disulfide bond</keyword>
<keyword id="KW-0325">Glycoprotein</keyword>
<keyword id="KW-0372">Hormone</keyword>
<keyword id="KW-0964">Secreted</keyword>
<keyword id="KW-0732">Signal</keyword>
<protein>
    <recommendedName>
        <fullName>Somatolactin</fullName>
        <shortName>SL</shortName>
    </recommendedName>
</protein>
<comment type="subcellular location">
    <subcellularLocation>
        <location>Secreted</location>
    </subcellularLocation>
</comment>
<comment type="tissue specificity">
    <text>Pituitary gland.</text>
</comment>
<comment type="similarity">
    <text evidence="3">Belongs to the somatotropin/prolactin family.</text>
</comment>
<reference key="1">
    <citation type="submission" date="2000-04" db="EMBL/GenBank/DDBJ databases">
        <title>Cloning and sequencing of Tetraodon miurus somatolactin.</title>
        <authorList>
            <person name="Rand-Weaver M."/>
            <person name="May D."/>
        </authorList>
    </citation>
    <scope>NUCLEOTIDE SEQUENCE [MRNA]</scope>
    <source>
        <tissue>Pituitary</tissue>
    </source>
</reference>
<organism>
    <name type="scientific">Tetraodon miurus</name>
    <name type="common">Congo puffer</name>
    <dbReference type="NCBI Taxonomy" id="94908"/>
    <lineage>
        <taxon>Eukaryota</taxon>
        <taxon>Metazoa</taxon>
        <taxon>Chordata</taxon>
        <taxon>Craniata</taxon>
        <taxon>Vertebrata</taxon>
        <taxon>Euteleostomi</taxon>
        <taxon>Actinopterygii</taxon>
        <taxon>Neopterygii</taxon>
        <taxon>Teleostei</taxon>
        <taxon>Neoteleostei</taxon>
        <taxon>Acanthomorphata</taxon>
        <taxon>Eupercaria</taxon>
        <taxon>Tetraodontiformes</taxon>
        <taxon>Tetradontoidea</taxon>
        <taxon>Tetraodontidae</taxon>
        <taxon>Tetraodon</taxon>
    </lineage>
</organism>
<name>SOML_TETMU</name>
<proteinExistence type="evidence at transcript level"/>
<accession>Q9I9H4</accession>
<sequence>MAALQEVLLAVLLWPVLVTISNPINCGDEQSSLSNCLSISEEKLLDRESFSTLSSSIVFLKNHVLCLRRCLSHSQYSSRQARQENACMTKVLPIPSSKSEIQQITDKWLLHAVLMLVQSWIKPLVYLQTTMVRYDYASDVLLNKTKWVLEKLISLEQGVVILIKKILNEAVMTTTVSELDLFPTDLQPDILESVMNDYSLLSCFKKDARKIEILLKLLKCRRNDMYNCA</sequence>